<dbReference type="EC" id="3.6.1.15"/>
<dbReference type="EC" id="3.4.22.28"/>
<dbReference type="EC" id="2.7.7.48"/>
<dbReference type="EMBL" id="AY517471">
    <property type="protein sequence ID" value="AAS01728.1"/>
    <property type="molecule type" value="Genomic_RNA"/>
</dbReference>
<dbReference type="SMR" id="Q6R325"/>
<dbReference type="MEROPS" id="C03.005"/>
<dbReference type="Proteomes" id="UP000006887">
    <property type="component" value="Genome"/>
</dbReference>
<dbReference type="GO" id="GO:0044162">
    <property type="term" value="C:host cell cytoplasmic vesicle membrane"/>
    <property type="evidence" value="ECO:0007669"/>
    <property type="project" value="UniProtKB-SubCell"/>
</dbReference>
<dbReference type="GO" id="GO:0016020">
    <property type="term" value="C:membrane"/>
    <property type="evidence" value="ECO:0007669"/>
    <property type="project" value="UniProtKB-KW"/>
</dbReference>
<dbReference type="GO" id="GO:0019028">
    <property type="term" value="C:viral capsid"/>
    <property type="evidence" value="ECO:0007669"/>
    <property type="project" value="UniProtKB-KW"/>
</dbReference>
<dbReference type="GO" id="GO:0005524">
    <property type="term" value="F:ATP binding"/>
    <property type="evidence" value="ECO:0007669"/>
    <property type="project" value="UniProtKB-KW"/>
</dbReference>
<dbReference type="GO" id="GO:0015267">
    <property type="term" value="F:channel activity"/>
    <property type="evidence" value="ECO:0007669"/>
    <property type="project" value="UniProtKB-KW"/>
</dbReference>
<dbReference type="GO" id="GO:0004197">
    <property type="term" value="F:cysteine-type endopeptidase activity"/>
    <property type="evidence" value="ECO:0007669"/>
    <property type="project" value="UniProtKB-EC"/>
</dbReference>
<dbReference type="GO" id="GO:0017111">
    <property type="term" value="F:ribonucleoside triphosphate phosphatase activity"/>
    <property type="evidence" value="ECO:0007669"/>
    <property type="project" value="UniProtKB-EC"/>
</dbReference>
<dbReference type="GO" id="GO:0003723">
    <property type="term" value="F:RNA binding"/>
    <property type="evidence" value="ECO:0007669"/>
    <property type="project" value="UniProtKB-KW"/>
</dbReference>
<dbReference type="GO" id="GO:0003724">
    <property type="term" value="F:RNA helicase activity"/>
    <property type="evidence" value="ECO:0007669"/>
    <property type="project" value="InterPro"/>
</dbReference>
<dbReference type="GO" id="GO:0003968">
    <property type="term" value="F:RNA-directed RNA polymerase activity"/>
    <property type="evidence" value="ECO:0007669"/>
    <property type="project" value="UniProtKB-KW"/>
</dbReference>
<dbReference type="GO" id="GO:0005198">
    <property type="term" value="F:structural molecule activity"/>
    <property type="evidence" value="ECO:0007669"/>
    <property type="project" value="InterPro"/>
</dbReference>
<dbReference type="GO" id="GO:0006351">
    <property type="term" value="P:DNA-templated transcription"/>
    <property type="evidence" value="ECO:0007669"/>
    <property type="project" value="InterPro"/>
</dbReference>
<dbReference type="GO" id="GO:0034220">
    <property type="term" value="P:monoatomic ion transmembrane transport"/>
    <property type="evidence" value="ECO:0007669"/>
    <property type="project" value="UniProtKB-KW"/>
</dbReference>
<dbReference type="GO" id="GO:0006508">
    <property type="term" value="P:proteolysis"/>
    <property type="evidence" value="ECO:0007669"/>
    <property type="project" value="UniProtKB-KW"/>
</dbReference>
<dbReference type="GO" id="GO:0046718">
    <property type="term" value="P:symbiont entry into host cell"/>
    <property type="evidence" value="ECO:0007669"/>
    <property type="project" value="UniProtKB-KW"/>
</dbReference>
<dbReference type="GO" id="GO:0039694">
    <property type="term" value="P:viral RNA genome replication"/>
    <property type="evidence" value="ECO:0007669"/>
    <property type="project" value="InterPro"/>
</dbReference>
<dbReference type="GO" id="GO:0019062">
    <property type="term" value="P:virion attachment to host cell"/>
    <property type="evidence" value="ECO:0007669"/>
    <property type="project" value="UniProtKB-KW"/>
</dbReference>
<dbReference type="CDD" id="cd23193">
    <property type="entry name" value="ps-ssRNA_Picornaviridae"/>
    <property type="match status" value="1"/>
</dbReference>
<dbReference type="CDD" id="cd00205">
    <property type="entry name" value="rhv_like"/>
    <property type="match status" value="2"/>
</dbReference>
<dbReference type="Gene3D" id="1.20.960.20">
    <property type="match status" value="1"/>
</dbReference>
<dbReference type="Gene3D" id="2.60.120.20">
    <property type="match status" value="3"/>
</dbReference>
<dbReference type="Gene3D" id="3.30.70.270">
    <property type="match status" value="1"/>
</dbReference>
<dbReference type="Gene3D" id="3.90.1720.10">
    <property type="entry name" value="endopeptidase domain like (from Nostoc punctiforme)"/>
    <property type="match status" value="1"/>
</dbReference>
<dbReference type="Gene3D" id="3.40.50.300">
    <property type="entry name" value="P-loop containing nucleotide triphosphate hydrolases"/>
    <property type="match status" value="1"/>
</dbReference>
<dbReference type="Gene3D" id="2.40.10.10">
    <property type="entry name" value="Trypsin-like serine proteases"/>
    <property type="match status" value="2"/>
</dbReference>
<dbReference type="InterPro" id="IPR043502">
    <property type="entry name" value="DNA/RNA_pol_sf"/>
</dbReference>
<dbReference type="InterPro" id="IPR000605">
    <property type="entry name" value="Helicase_SF3_ssDNA/RNA_vir"/>
</dbReference>
<dbReference type="InterPro" id="IPR014759">
    <property type="entry name" value="Helicase_SF3_ssRNA_vir"/>
</dbReference>
<dbReference type="InterPro" id="IPR024354">
    <property type="entry name" value="Hepatitis_A_VP1-2A"/>
</dbReference>
<dbReference type="InterPro" id="IPR007053">
    <property type="entry name" value="LRAT_dom"/>
</dbReference>
<dbReference type="InterPro" id="IPR027417">
    <property type="entry name" value="P-loop_NTPase"/>
</dbReference>
<dbReference type="InterPro" id="IPR044067">
    <property type="entry name" value="PCV_3C_PRO"/>
</dbReference>
<dbReference type="InterPro" id="IPR000199">
    <property type="entry name" value="Peptidase_C3A/C3B_picornavir"/>
</dbReference>
<dbReference type="InterPro" id="IPR009003">
    <property type="entry name" value="Peptidase_S1_PA"/>
</dbReference>
<dbReference type="InterPro" id="IPR043504">
    <property type="entry name" value="Peptidase_S1_PA_chymotrypsin"/>
</dbReference>
<dbReference type="InterPro" id="IPR001676">
    <property type="entry name" value="Picornavirus_capsid"/>
</dbReference>
<dbReference type="InterPro" id="IPR043128">
    <property type="entry name" value="Rev_trsase/Diguanyl_cyclase"/>
</dbReference>
<dbReference type="InterPro" id="IPR033703">
    <property type="entry name" value="Rhv-like"/>
</dbReference>
<dbReference type="InterPro" id="IPR001205">
    <property type="entry name" value="RNA-dir_pol_C"/>
</dbReference>
<dbReference type="InterPro" id="IPR007094">
    <property type="entry name" value="RNA-dir_pol_PSvirus"/>
</dbReference>
<dbReference type="InterPro" id="IPR029053">
    <property type="entry name" value="Viral_coat"/>
</dbReference>
<dbReference type="Pfam" id="PF12944">
    <property type="entry name" value="HAV_VP"/>
    <property type="match status" value="1"/>
</dbReference>
<dbReference type="Pfam" id="PF04970">
    <property type="entry name" value="LRAT"/>
    <property type="match status" value="1"/>
</dbReference>
<dbReference type="Pfam" id="PF00548">
    <property type="entry name" value="Peptidase_C3"/>
    <property type="match status" value="1"/>
</dbReference>
<dbReference type="Pfam" id="PF00680">
    <property type="entry name" value="RdRP_1"/>
    <property type="match status" value="1"/>
</dbReference>
<dbReference type="Pfam" id="PF00073">
    <property type="entry name" value="Rhv"/>
    <property type="match status" value="2"/>
</dbReference>
<dbReference type="Pfam" id="PF00910">
    <property type="entry name" value="RNA_helicase"/>
    <property type="match status" value="1"/>
</dbReference>
<dbReference type="SUPFAM" id="SSF56672">
    <property type="entry name" value="DNA/RNA polymerases"/>
    <property type="match status" value="1"/>
</dbReference>
<dbReference type="SUPFAM" id="SSF52540">
    <property type="entry name" value="P-loop containing nucleoside triphosphate hydrolases"/>
    <property type="match status" value="1"/>
</dbReference>
<dbReference type="SUPFAM" id="SSF88633">
    <property type="entry name" value="Positive stranded ssRNA viruses"/>
    <property type="match status" value="3"/>
</dbReference>
<dbReference type="SUPFAM" id="SSF50494">
    <property type="entry name" value="Trypsin-like serine proteases"/>
    <property type="match status" value="1"/>
</dbReference>
<dbReference type="PROSITE" id="PS51934">
    <property type="entry name" value="LRAT"/>
    <property type="match status" value="1"/>
</dbReference>
<dbReference type="PROSITE" id="PS51874">
    <property type="entry name" value="PCV_3C_PRO"/>
    <property type="match status" value="1"/>
</dbReference>
<dbReference type="PROSITE" id="PS50507">
    <property type="entry name" value="RDRP_SSRNA_POS"/>
    <property type="match status" value="1"/>
</dbReference>
<dbReference type="PROSITE" id="PS51218">
    <property type="entry name" value="SF3_HELICASE_2"/>
    <property type="match status" value="1"/>
</dbReference>
<sequence>MSKLFSTVGRTVDEVLSVLNDEDTESYAGPDRTAVVGGGFLTTVDQSSVSTATMGSLQDVQYRTAVDIPGSRVTQGERFFLIDQREWNSTQSEWQLLGKIDIVKELLDQSYAVDGLLKYHSYARFGLDVIVQINPTSFQAGGLIAALVPYDQVDIESIAAMTTYCHGKLNCNINNVVRMKVPYIYSRGCYNLRNSAYSIWMLVIRVWSRLQLGSGTSTQITITTLARFVDLELHGLSPLVAQMMRNEFRLSSSSNIVNLANYEDARAKVSLALGQEGFSRDSSSTGGGMLYHFSQWTSIPCLAFIFTFPGTVGPGTRIWSTTVDPFSCNLRAFSTVHPTNLSSIAGMFCFWRGDIVFEFQVFRTKYHSGRLMFVYVPGDENTKISTLTATQASSGLTAVFDINGVNSTLVFRCPFISDTPYRVNPTTHKSPWPYATGKLVCYVYNRLNAPASVSPSVSINVYKSAVDLELYAPVYGVSPTNTSVFAQGKGDEGGFSSVPEVEQHVVEDKEPQGPLHVTPFGAVKAMEDPQLARKTPGTFPELAPGKPRHTVDHMDLYKFMGRAHYLWGHKFTKTDMQYTFQIPLSPIKEGFVTGTLRWFLSLFQLYRGSLDITMTFAGKTNVDGIVYFVPEGVAIETERKEQTPLLTLNYKTSVGAIRFNTGQTTNVQFRIPFYTPLEHIATHSKNAMDSVLGAITTQITNYSAQDEYLQVTYYISFNEDSQFSVPRAVPVVSSFTDTSSKTVMNTYWLDDDELVEESSHFSFDEIEEAQCSKCKIDLGDIVSCSGEKAKHFGVYVGDGVVHVDPEGNATSWFMKRKATVKKSKNLDKWCFALSPRIDRTLICETANLMVGREVEYDIFVKNCETYARGIASGDYGTKEGEKWKTLLSAVGVAAMTTTMMAMRHELLDTSLTKLPQKVGEVTDEVRKILEDTSAGVREFKEKVSSILRKTWPGKTSIKIMKWTCRIVKMCVGVGLCYMHGWDSKTVTAVVTMFSMDFLDLVIDGIEIGRMIIDELTTPKAQGLSEINQVLSIAKNAKDVIKMLIEIFCKVIERITGEHGKKIQWAQDKKEEIMNVLERAEKWITTSDDHSEGIECLKLVRSIQSVIRGEESLKELAGELRAVGTHVLNKLGRLDKPNAPILVRAEPTVLYLYGNRGGGKSLASMAIAVKLCKELGISHVEGIYTKPIMSDFWDGYAGQPVVIMDDLGQSTSDEDWTNFCQLVSSCPLRLNMANLEKKGTQFNSPFIIASSNLSHPCPKTVYCTDAIARRLHIKVKVSPKEEFSTHAMLDVAKAKKVGAYCNLDCLDLQKISDLASTPVSVQDIVLEMLHTNVDKQTLMGDIIQYWAQSNPREVFDTMAEGKNSGKYLWLFERLKTSKWYILGCVGAVLAVSALGVFAYHMIKNHFRDQQHDQSAYSVAIKPLRVVRLEQSDAQSVVDISNVVHGNLVRVGVGPNEARIHWLYNGLGVYDTYILMPYHGIKDADVDDDLYIERAGTIYSTNMKMVQVLFLESREGDLVLINVPRLPKFRDIRNHFSTEENIRRAEGMPGTLCTLDHERFTLVTESDLKMVEAATYVCEDDKGVRTDISVGRSWKAKACTVAGMCGGALVTSNNKMQNAIVGIHVAGGAHAISRVITKEMIEEMLKTRAQCSRIWKTEFVEEKISVGSKTKYHKSPLYDFCPQEVVKCPTKLFYQGEIDVMQVMLAKYSSPIVSEPSGYATVVEAYTNRMVSFFPEPRQLTYDECINGIEGLDAIDLKTSAGFPYNTLGLRKSDLIINGKMAHRLQQDVEKMEEDLHMNRSIQVVFTTCAKDELRPLSKVMLGKTRAIEACPVSFTILFRRYLGYALAQIQSHPGFHTGIAVGVDPDQDWHCMWYSIVTQCDLVVGLDFSNYDASLSPFMIYHAGRVLGQICGLDPRLVDRIMEPIVNSVHQLGSMRYYVHGSMPSGTPATSVLNSIINVVNICYVLCALEEISVFEVFKLFKILTYGDDVLLCIKKEYLDQKSFPLSSFVQGLEELGLSPTGADKMEVKVTPVHKMSFLKRTFYVDEWSICHPRISEETVYSMLAWKSDNASMKDLIETSIWFMFHHGPRKYVRFCTWLRGVLCRVGIGLYIPTYKELEVRYDRLVKYRFIDDNF</sequence>
<reference key="1">
    <citation type="submission" date="2004-01" db="EMBL/GenBank/DDBJ databases">
        <title>The complete genomic sequence of avian encephalomyelitis virus strain van Roekel.</title>
        <authorList>
            <person name="Guan Y."/>
            <person name="Ge J."/>
            <person name="Chen H."/>
        </authorList>
    </citation>
    <scope>NUCLEOTIDE SEQUENCE [GENOMIC RNA]</scope>
</reference>
<name>POLG_AEVVR</name>
<comment type="function">
    <text evidence="1">Capsid proteins VP1, VP2, and VP3 form a closed capsid enclosing the viral positive strand RNA genome. All these proteins contain a beta-sheet structure called beta-barrel jelly roll. Together they form an icosahedral capsid (T=3) composed of 60 copies of each VP1, VP2, and VP3, with a diameter of approximately 300 Angstroms. VP1 is situated at the 12 fivefold axes, whereas VP2 and VP3 are located at the quasi-sixfold axes (By similarity).</text>
</comment>
<comment type="function">
    <molecule>Capsid protein VP0</molecule>
    <text evidence="1">VP0 precursor is a component of immature procapsids. The N-terminal domain of VP0, protein VP4, is needed for the assembly of 12 pentamers into the icosahedral structure. Unlike other picornaviruses, AEV VP4 may not be myristoylated (By similarity).</text>
</comment>
<comment type="function">
    <text evidence="1">Protein 2B and 2BC precursor affect membrane integrity and cause an increase in membrane permeability.</text>
</comment>
<comment type="function">
    <molecule>Protein 2C</molecule>
    <text evidence="1">Associates with and induces structural rearrangements of intracellular membranes. It displays RNA-binding, nucleotide binding and NTPase activities (By similarity).</text>
</comment>
<comment type="function">
    <text evidence="1">Protein 3A, via its hydrophobic domain, serves as membrane anchor.</text>
</comment>
<comment type="function">
    <text evidence="1">Protein 3B is covalently linked to the 5'-end of both the positive-strand and negative-strand genomic RNAs. It acts as a genome-linked replication primer (By similarity).</text>
</comment>
<comment type="function">
    <molecule>Protease 3C</molecule>
    <text evidence="1">Cysteine protease that generates mature viral proteins from the precursor polyprotein. In addition to its proteolytic activity, it binds to viral RNA, and thus influences viral genome replication. RNA and substrate bind cooperatively to the protease (By similarity).</text>
</comment>
<comment type="function">
    <text evidence="3">RNA-directed RNA polymerase 3D-POL replicates genomic and antigenomic RNA by recognizing replications specific signals.</text>
</comment>
<comment type="catalytic activity">
    <reaction evidence="3">
        <text>RNA(n) + a ribonucleoside 5'-triphosphate = RNA(n+1) + diphosphate</text>
        <dbReference type="Rhea" id="RHEA:21248"/>
        <dbReference type="Rhea" id="RHEA-COMP:14527"/>
        <dbReference type="Rhea" id="RHEA-COMP:17342"/>
        <dbReference type="ChEBI" id="CHEBI:33019"/>
        <dbReference type="ChEBI" id="CHEBI:61557"/>
        <dbReference type="ChEBI" id="CHEBI:140395"/>
        <dbReference type="EC" id="2.7.7.48"/>
    </reaction>
</comment>
<comment type="catalytic activity">
    <reaction>
        <text>a ribonucleoside 5'-triphosphate + H2O = a ribonucleoside 5'-diphosphate + phosphate + H(+)</text>
        <dbReference type="Rhea" id="RHEA:23680"/>
        <dbReference type="ChEBI" id="CHEBI:15377"/>
        <dbReference type="ChEBI" id="CHEBI:15378"/>
        <dbReference type="ChEBI" id="CHEBI:43474"/>
        <dbReference type="ChEBI" id="CHEBI:57930"/>
        <dbReference type="ChEBI" id="CHEBI:61557"/>
        <dbReference type="EC" id="3.6.1.15"/>
    </reaction>
</comment>
<comment type="catalytic activity">
    <reaction evidence="5">
        <text>Selective cleavage of Gln-|-Gly bond in the poliovirus polyprotein. In other picornavirus reactions Glu may be substituted for Gln, and Ser or Thr for Gly.</text>
        <dbReference type="EC" id="3.4.22.28"/>
    </reaction>
</comment>
<comment type="subcellular location">
    <molecule>Capsid protein VP2</molecule>
    <subcellularLocation>
        <location>Virion</location>
    </subcellularLocation>
    <subcellularLocation>
        <location evidence="7">Host cytoplasm</location>
    </subcellularLocation>
</comment>
<comment type="subcellular location">
    <molecule>Capsid protein VP3</molecule>
    <subcellularLocation>
        <location>Virion</location>
    </subcellularLocation>
    <subcellularLocation>
        <location evidence="7">Host cytoplasm</location>
    </subcellularLocation>
</comment>
<comment type="subcellular location">
    <molecule>Capsid protein VP1</molecule>
    <subcellularLocation>
        <location>Virion</location>
    </subcellularLocation>
    <subcellularLocation>
        <location evidence="7">Host cytoplasm</location>
    </subcellularLocation>
</comment>
<comment type="subcellular location">
    <molecule>Protein 2B</molecule>
    <subcellularLocation>
        <location evidence="7">Host cytoplasmic vesicle membrane</location>
        <topology evidence="7">Peripheral membrane protein</topology>
        <orientation evidence="7">Cytoplasmic side</orientation>
    </subcellularLocation>
    <text evidence="1">Probably localizes to the surface of intracellular membrane vesicles that are induced after virus infection as the site for viral RNA replication. These vesicles are derived from the endoplasmic reticulum (By similarity).</text>
</comment>
<comment type="subcellular location">
    <molecule>Protein 2C</molecule>
    <subcellularLocation>
        <location evidence="7">Host cytoplasmic vesicle membrane</location>
        <topology evidence="7">Peripheral membrane protein</topology>
        <orientation evidence="7">Cytoplasmic side</orientation>
    </subcellularLocation>
    <text evidence="1">Probably localizes to the surface of intracellular membrane vesicles that are induced after virus infection as the site for viral RNA replication. These vesicles are derived from the endoplasmic reticulum. May associate with membranes through a N-terminal amphipathic helix (By similarity).</text>
</comment>
<comment type="subcellular location">
    <molecule>Protein 3A</molecule>
    <subcellularLocation>
        <location evidence="7">Host cytoplasmic vesicle membrane</location>
        <topology evidence="7">Peripheral membrane protein</topology>
        <orientation evidence="7">Cytoplasmic side</orientation>
    </subcellularLocation>
    <text evidence="1">Probably localizes to the surface of intracellular membrane vesicles that are induced after virus infection as the site for viral RNA replication. These vesicles are derived from the endoplasmic reticulum (By similarity).</text>
</comment>
<comment type="subcellular location">
    <molecule>Protein 3B</molecule>
    <subcellularLocation>
        <location evidence="7">Virion</location>
    </subcellularLocation>
</comment>
<comment type="subcellular location">
    <molecule>Protease 3C</molecule>
    <subcellularLocation>
        <location evidence="7">Host cytoplasm</location>
    </subcellularLocation>
</comment>
<comment type="subcellular location">
    <molecule>RNA-directed RNA polymerase 3D-POL</molecule>
    <subcellularLocation>
        <location evidence="7">Host cytoplasmic vesicle membrane</location>
        <topology evidence="7">Peripheral membrane protein</topology>
        <orientation evidence="7">Cytoplasmic side</orientation>
    </subcellularLocation>
    <text evidence="1">Interacts with membranes in a complex with viral protein 3AB. Probably localizes to the surface of intracellular membrane vesicles that are induced after virus infection as the site for viral RNA replication. These vesicles are derived from the endoplasmic reticulum (By similarity).</text>
</comment>
<comment type="PTM">
    <text evidence="1">Specific enzymatic cleavages by the viral protease in vivo yield a variety of precursors and mature proteins. During virion maturation, non-infectious particles are rendered infectious following cleavage of VP0. This maturation cleavage is followed by a conformational change of the particle (By similarity).</text>
</comment>
<comment type="PTM">
    <text evidence="1">VPg is uridylylated by the polymerase and is covalently linked to the 5'-end of genomic RNA. This uridylylated form acts as a nucleotide-peptide primer for the polymerase (By similarity).</text>
</comment>
<comment type="miscellaneous">
    <text>Strain Van Reokel is an egg-adapted strain.</text>
</comment>
<comment type="similarity">
    <text evidence="7">Belongs to the picornaviridae polyprotein family.</text>
</comment>
<organism>
    <name type="scientific">Avian encephalomyelitis virus (strain Van Reokel)</name>
    <name type="common">AEV</name>
    <dbReference type="NCBI Taxonomy" id="475779"/>
    <lineage>
        <taxon>Viruses</taxon>
        <taxon>Riboviria</taxon>
        <taxon>Orthornavirae</taxon>
        <taxon>Pisuviricota</taxon>
        <taxon>Pisoniviricetes</taxon>
        <taxon>Picornavirales</taxon>
        <taxon>Picornaviridae</taxon>
        <taxon>Heptrevirinae</taxon>
        <taxon>Tremovirus</taxon>
        <taxon>Tremovirus A</taxon>
    </lineage>
</organism>
<organismHost>
    <name type="scientific">Anas</name>
    <name type="common">ducks</name>
    <dbReference type="NCBI Taxonomy" id="8835"/>
</organismHost>
<organismHost>
    <name type="scientific">Gallus gallus</name>
    <name type="common">Chicken</name>
    <dbReference type="NCBI Taxonomy" id="9031"/>
</organismHost>
<organismHost>
    <name type="scientific">Phasianidae</name>
    <name type="common">turkeys</name>
    <dbReference type="NCBI Taxonomy" id="9005"/>
</organismHost>
<keyword id="KW-0067">ATP-binding</keyword>
<keyword id="KW-0167">Capsid protein</keyword>
<keyword id="KW-0191">Covalent protein-RNA linkage</keyword>
<keyword id="KW-0347">Helicase</keyword>
<keyword id="KW-1035">Host cytoplasm</keyword>
<keyword id="KW-1036">Host cytoplasmic vesicle</keyword>
<keyword id="KW-1043">Host membrane</keyword>
<keyword id="KW-0945">Host-virus interaction</keyword>
<keyword id="KW-0378">Hydrolase</keyword>
<keyword id="KW-0407">Ion channel</keyword>
<keyword id="KW-0406">Ion transport</keyword>
<keyword id="KW-0472">Membrane</keyword>
<keyword id="KW-0547">Nucleotide-binding</keyword>
<keyword id="KW-0548">Nucleotidyltransferase</keyword>
<keyword id="KW-0597">Phosphoprotein</keyword>
<keyword id="KW-0645">Protease</keyword>
<keyword id="KW-0694">RNA-binding</keyword>
<keyword id="KW-0696">RNA-directed RNA polymerase</keyword>
<keyword id="KW-0788">Thiol protease</keyword>
<keyword id="KW-0808">Transferase</keyword>
<keyword id="KW-0813">Transport</keyword>
<keyword id="KW-1161">Viral attachment to host cell</keyword>
<keyword id="KW-1182">Viral ion channel</keyword>
<keyword id="KW-0693">Viral RNA replication</keyword>
<keyword id="KW-0946">Virion</keyword>
<keyword id="KW-1160">Virus entry into host cell</keyword>
<proteinExistence type="inferred from homology"/>
<accession>Q6R325</accession>
<feature type="chain" id="PRO_0000310508" description="Genome polyprotein" evidence="1">
    <location>
        <begin position="1"/>
        <end position="2134"/>
    </location>
</feature>
<feature type="chain" id="PRO_0000310509" description="Capsid protein VP0" evidence="2">
    <location>
        <begin position="1"/>
        <end position="242"/>
    </location>
</feature>
<feature type="chain" id="PRO_0000310510" description="Capsid protein VP4" evidence="2">
    <location>
        <begin position="1"/>
        <end position="19"/>
    </location>
</feature>
<feature type="chain" id="PRO_0000310511" description="Capsid protein VP2" evidence="2">
    <location>
        <begin position="20"/>
        <end position="242"/>
    </location>
</feature>
<feature type="chain" id="PRO_0000310512" description="Capsid protein VP3" evidence="2">
    <location>
        <begin position="243"/>
        <end position="487"/>
    </location>
</feature>
<feature type="chain" id="PRO_0000310513" description="Capsid protein VP1" evidence="2">
    <location>
        <begin position="488"/>
        <end position="757"/>
    </location>
</feature>
<feature type="chain" id="PRO_0000310514" description="Protein 2A" evidence="2">
    <location>
        <begin position="758"/>
        <end position="806"/>
    </location>
</feature>
<feature type="chain" id="PRO_0000310515" description="Protein 2B" evidence="2">
    <location>
        <begin position="807"/>
        <end position="1021"/>
    </location>
</feature>
<feature type="chain" id="PRO_0000310516" description="Protein 2C" evidence="2">
    <location>
        <begin position="1022"/>
        <end position="1347"/>
    </location>
</feature>
<feature type="chain" id="PRO_0000310517" description="Protein 3A" evidence="2">
    <location>
        <begin position="1348"/>
        <end position="1412"/>
    </location>
</feature>
<feature type="chain" id="PRO_0000310518" description="Protein 3B" evidence="2">
    <location>
        <begin position="1413"/>
        <end position="1433"/>
    </location>
</feature>
<feature type="chain" id="PRO_0000310519" description="Protease 3C" evidence="2">
    <location>
        <begin position="1434"/>
        <end position="1648"/>
    </location>
</feature>
<feature type="chain" id="PRO_0000310520" description="RNA-directed RNA polymerase 3D-POL" evidence="2">
    <location>
        <begin position="1649"/>
        <end position="2134"/>
    </location>
</feature>
<feature type="topological domain" description="Cytoplasmic" evidence="2">
    <location>
        <begin position="1"/>
        <end position="1377"/>
    </location>
</feature>
<feature type="intramembrane region" evidence="2">
    <location>
        <begin position="1378"/>
        <end position="1392"/>
    </location>
</feature>
<feature type="topological domain" description="Cytoplasmic" evidence="2">
    <location>
        <begin position="1393"/>
        <end position="2134"/>
    </location>
</feature>
<feature type="domain" description="LRAT" evidence="6">
    <location>
        <begin position="781"/>
        <end position="882"/>
    </location>
</feature>
<feature type="domain" description="SF3 helicase" evidence="4">
    <location>
        <begin position="1127"/>
        <end position="1289"/>
    </location>
</feature>
<feature type="domain" description="Peptidase C3" evidence="5">
    <location>
        <begin position="1431"/>
        <end position="1643"/>
    </location>
</feature>
<feature type="domain" description="RdRp catalytic" evidence="3">
    <location>
        <begin position="1880"/>
        <end position="2001"/>
    </location>
</feature>
<feature type="active site" evidence="6">
    <location>
        <position position="791"/>
    </location>
</feature>
<feature type="active site" evidence="6">
    <location>
        <position position="802"/>
    </location>
</feature>
<feature type="active site" description="Acyl-thioester intermediate" evidence="6">
    <location>
        <position position="863"/>
    </location>
</feature>
<feature type="active site" description="For protease 3C activity" evidence="5">
    <location>
        <position position="1477"/>
    </location>
</feature>
<feature type="active site" description="For protease 3C activity" evidence="5">
    <location>
        <position position="1515"/>
    </location>
</feature>
<feature type="active site" description="For protease 3C activity" evidence="5">
    <location>
        <position position="1603"/>
    </location>
</feature>
<feature type="binding site" evidence="4">
    <location>
        <begin position="1153"/>
        <end position="1160"/>
    </location>
    <ligand>
        <name>ATP</name>
        <dbReference type="ChEBI" id="CHEBI:30616"/>
    </ligand>
</feature>
<feature type="site" description="Cleavage" evidence="2">
    <location>
        <begin position="19"/>
        <end position="20"/>
    </location>
</feature>
<feature type="site" description="Cleavage; by protease 3C" evidence="2">
    <location>
        <begin position="242"/>
        <end position="243"/>
    </location>
</feature>
<feature type="site" description="Cleavage; by protease 3C" evidence="2">
    <location>
        <begin position="487"/>
        <end position="488"/>
    </location>
</feature>
<feature type="site" description="Cleavage; by host" evidence="2">
    <location>
        <begin position="757"/>
        <end position="758"/>
    </location>
</feature>
<feature type="site" description="Cleavage; by protease 3C" evidence="1">
    <location>
        <begin position="806"/>
        <end position="807"/>
    </location>
</feature>
<feature type="site" description="Cleavage; by protease 3C" evidence="2">
    <location>
        <begin position="1021"/>
        <end position="1022"/>
    </location>
</feature>
<feature type="site" description="Cleavage; by protease 3C" evidence="2">
    <location>
        <begin position="1347"/>
        <end position="1348"/>
    </location>
</feature>
<feature type="site" description="Cleavage; by protease 3C" evidence="2">
    <location>
        <begin position="1412"/>
        <end position="1413"/>
    </location>
</feature>
<feature type="site" description="Cleavage; by protease 3C" evidence="2">
    <location>
        <begin position="1433"/>
        <end position="1434"/>
    </location>
</feature>
<feature type="site" description="Cleavage; by protease 3C" evidence="1">
    <location>
        <begin position="1648"/>
        <end position="1649"/>
    </location>
</feature>
<feature type="modified residue" description="O-(5'-phospho-RNA)-tyrosine" evidence="1">
    <location>
        <position position="1415"/>
    </location>
</feature>
<evidence type="ECO:0000250" key="1"/>
<evidence type="ECO:0000255" key="2"/>
<evidence type="ECO:0000255" key="3">
    <source>
        <dbReference type="PROSITE-ProRule" id="PRU00539"/>
    </source>
</evidence>
<evidence type="ECO:0000255" key="4">
    <source>
        <dbReference type="PROSITE-ProRule" id="PRU00551"/>
    </source>
</evidence>
<evidence type="ECO:0000255" key="5">
    <source>
        <dbReference type="PROSITE-ProRule" id="PRU01222"/>
    </source>
</evidence>
<evidence type="ECO:0000255" key="6">
    <source>
        <dbReference type="PROSITE-ProRule" id="PRU01283"/>
    </source>
</evidence>
<evidence type="ECO:0000305" key="7"/>
<protein>
    <recommendedName>
        <fullName>Genome polyprotein</fullName>
    </recommendedName>
    <component>
        <recommendedName>
            <fullName>Capsid protein VP0</fullName>
        </recommendedName>
        <alternativeName>
            <fullName>VP4-VP2</fullName>
        </alternativeName>
    </component>
    <component>
        <recommendedName>
            <fullName>Capsid protein VP4</fullName>
        </recommendedName>
        <alternativeName>
            <fullName>P1A</fullName>
        </alternativeName>
        <alternativeName>
            <fullName>Virion protein 4</fullName>
        </alternativeName>
    </component>
    <component>
        <recommendedName>
            <fullName>Capsid protein VP2</fullName>
        </recommendedName>
        <alternativeName>
            <fullName>P1B</fullName>
        </alternativeName>
        <alternativeName>
            <fullName>Virion protein 2</fullName>
        </alternativeName>
    </component>
    <component>
        <recommendedName>
            <fullName>Capsid protein VP3</fullName>
        </recommendedName>
        <alternativeName>
            <fullName>P1C</fullName>
        </alternativeName>
        <alternativeName>
            <fullName>Virion protein 3</fullName>
        </alternativeName>
    </component>
    <component>
        <recommendedName>
            <fullName>Capsid protein VP1</fullName>
        </recommendedName>
        <alternativeName>
            <fullName>P1D</fullName>
        </alternativeName>
        <alternativeName>
            <fullName>Virion protein 1</fullName>
        </alternativeName>
    </component>
    <component>
        <recommendedName>
            <fullName>Protein 2A</fullName>
            <shortName>P2A</shortName>
        </recommendedName>
    </component>
    <component>
        <recommendedName>
            <fullName>Protein 2B</fullName>
            <shortName>P2B</shortName>
        </recommendedName>
    </component>
    <component>
        <recommendedName>
            <fullName>Protein 2C</fullName>
            <shortName>P2C</shortName>
            <ecNumber>3.6.1.15</ecNumber>
        </recommendedName>
    </component>
    <component>
        <recommendedName>
            <fullName>Protein 3A</fullName>
            <shortName>P3A</shortName>
        </recommendedName>
    </component>
    <component>
        <recommendedName>
            <fullName>Protein 3B</fullName>
            <shortName>P3B</shortName>
        </recommendedName>
        <alternativeName>
            <fullName>VPg</fullName>
        </alternativeName>
    </component>
    <component>
        <recommendedName>
            <fullName>Protease 3C</fullName>
            <shortName>P3C</shortName>
            <ecNumber>3.4.22.28</ecNumber>
        </recommendedName>
        <alternativeName>
            <fullName>Picornain 3C</fullName>
        </alternativeName>
    </component>
    <component>
        <recommendedName>
            <fullName>RNA-directed RNA polymerase 3D-POL</fullName>
            <shortName>P3D-POL</shortName>
            <ecNumber>2.7.7.48</ecNumber>
        </recommendedName>
    </component>
</protein>